<keyword id="KW-0067">ATP-binding</keyword>
<keyword id="KW-0963">Cytoplasm</keyword>
<keyword id="KW-0210">Decarboxylase</keyword>
<keyword id="KW-0312">Gluconeogenesis</keyword>
<keyword id="KW-0456">Lyase</keyword>
<keyword id="KW-0464">Manganese</keyword>
<keyword id="KW-0479">Metal-binding</keyword>
<keyword id="KW-0547">Nucleotide-binding</keyword>
<proteinExistence type="inferred from homology"/>
<sequence length="539" mass="58766">MKTIGEFNAAHGPEAIGLTDLAAVHWNLEAPRLYEEALRRNEAQLARGGALVATTGSHTGRSPKDKYVVRDAGTENEIWWDNNGSITPDQFATLLDDFRAHARGKELFAQDLFGGADPAHRVRARVYTELAWHSLFIRNLLIRPERADLAAYVPELTIIDLPSFQADPARHGCRSKTVIAIDFSQKIVLIGGSAYAGEMKKSVFTYLNYVLPGTGVMPMHCSANASLDETGDSALFFGLSGTGKTTLSNDSSRQLIGDDEHGWSRDGIFNFEGGCYAKTIRLSRNAEPEIYATTERFGTVMENVVIDPLTRVPDFDDASLTENTRCAYPLDFIANASATGRAGHPKNIVMLTCDAFGVMPPIAKLTGAEAMYHFLSGYTAKVAGTERGLTAPEATFSTCFGAPFMPRHPSVYGNLLRELMAEHGVDCWLVNTGWTGGGVGTGRRMPIRVTRRLLSAALDGSLAQVEFRRDPYFGFSVPVEVPGVETQVLSPVETWTNKAAFADTATRLVTMFRENFKRFESHVDADVRAAEPVAAAIAA</sequence>
<gene>
    <name evidence="1" type="primary">pckA</name>
    <name type="ordered locus">Mext_1639</name>
</gene>
<comment type="function">
    <text evidence="1">Involved in the gluconeogenesis. Catalyzes the conversion of oxaloacetate (OAA) to phosphoenolpyruvate (PEP) through direct phosphoryl transfer between the nucleoside triphosphate and OAA.</text>
</comment>
<comment type="catalytic activity">
    <reaction evidence="1">
        <text>oxaloacetate + ATP = phosphoenolpyruvate + ADP + CO2</text>
        <dbReference type="Rhea" id="RHEA:18617"/>
        <dbReference type="ChEBI" id="CHEBI:16452"/>
        <dbReference type="ChEBI" id="CHEBI:16526"/>
        <dbReference type="ChEBI" id="CHEBI:30616"/>
        <dbReference type="ChEBI" id="CHEBI:58702"/>
        <dbReference type="ChEBI" id="CHEBI:456216"/>
        <dbReference type="EC" id="4.1.1.49"/>
    </reaction>
</comment>
<comment type="cofactor">
    <cofactor evidence="1">
        <name>Mn(2+)</name>
        <dbReference type="ChEBI" id="CHEBI:29035"/>
    </cofactor>
    <text evidence="1">Binds 1 Mn(2+) ion per subunit.</text>
</comment>
<comment type="pathway">
    <text evidence="1">Carbohydrate biosynthesis; gluconeogenesis.</text>
</comment>
<comment type="subcellular location">
    <subcellularLocation>
        <location evidence="1">Cytoplasm</location>
    </subcellularLocation>
</comment>
<comment type="similarity">
    <text evidence="1">Belongs to the phosphoenolpyruvate carboxykinase (ATP) family.</text>
</comment>
<organism>
    <name type="scientific">Methylorubrum extorquens (strain PA1)</name>
    <name type="common">Methylobacterium extorquens</name>
    <dbReference type="NCBI Taxonomy" id="419610"/>
    <lineage>
        <taxon>Bacteria</taxon>
        <taxon>Pseudomonadati</taxon>
        <taxon>Pseudomonadota</taxon>
        <taxon>Alphaproteobacteria</taxon>
        <taxon>Hyphomicrobiales</taxon>
        <taxon>Methylobacteriaceae</taxon>
        <taxon>Methylorubrum</taxon>
    </lineage>
</organism>
<feature type="chain" id="PRO_1000125073" description="Phosphoenolpyruvate carboxykinase (ATP)">
    <location>
        <begin position="1"/>
        <end position="539"/>
    </location>
</feature>
<feature type="binding site" evidence="1">
    <location>
        <position position="61"/>
    </location>
    <ligand>
        <name>substrate</name>
    </ligand>
</feature>
<feature type="binding site" evidence="1">
    <location>
        <position position="195"/>
    </location>
    <ligand>
        <name>substrate</name>
    </ligand>
</feature>
<feature type="binding site" evidence="1">
    <location>
        <position position="201"/>
    </location>
    <ligand>
        <name>ATP</name>
        <dbReference type="ChEBI" id="CHEBI:30616"/>
    </ligand>
</feature>
<feature type="binding site" evidence="1">
    <location>
        <position position="201"/>
    </location>
    <ligand>
        <name>Mn(2+)</name>
        <dbReference type="ChEBI" id="CHEBI:29035"/>
    </ligand>
</feature>
<feature type="binding site" evidence="1">
    <location>
        <position position="201"/>
    </location>
    <ligand>
        <name>substrate</name>
    </ligand>
</feature>
<feature type="binding site" evidence="1">
    <location>
        <position position="220"/>
    </location>
    <ligand>
        <name>ATP</name>
        <dbReference type="ChEBI" id="CHEBI:30616"/>
    </ligand>
</feature>
<feature type="binding site" evidence="1">
    <location>
        <position position="220"/>
    </location>
    <ligand>
        <name>Mn(2+)</name>
        <dbReference type="ChEBI" id="CHEBI:29035"/>
    </ligand>
</feature>
<feature type="binding site" evidence="1">
    <location>
        <begin position="238"/>
        <end position="246"/>
    </location>
    <ligand>
        <name>ATP</name>
        <dbReference type="ChEBI" id="CHEBI:30616"/>
    </ligand>
</feature>
<feature type="binding site" evidence="1">
    <location>
        <position position="259"/>
    </location>
    <ligand>
        <name>Mn(2+)</name>
        <dbReference type="ChEBI" id="CHEBI:29035"/>
    </ligand>
</feature>
<feature type="binding site" evidence="1">
    <location>
        <position position="287"/>
    </location>
    <ligand>
        <name>ATP</name>
        <dbReference type="ChEBI" id="CHEBI:30616"/>
    </ligand>
</feature>
<feature type="binding site" evidence="1">
    <location>
        <position position="325"/>
    </location>
    <ligand>
        <name>ATP</name>
        <dbReference type="ChEBI" id="CHEBI:30616"/>
    </ligand>
</feature>
<feature type="binding site" evidence="1">
    <location>
        <position position="325"/>
    </location>
    <ligand>
        <name>substrate</name>
    </ligand>
</feature>
<feature type="binding site" evidence="1">
    <location>
        <position position="450"/>
    </location>
    <ligand>
        <name>ATP</name>
        <dbReference type="ChEBI" id="CHEBI:30616"/>
    </ligand>
</feature>
<reference key="1">
    <citation type="submission" date="2007-12" db="EMBL/GenBank/DDBJ databases">
        <title>Complete sequence of Methylobacterium extorquens PA1.</title>
        <authorList>
            <consortium name="US DOE Joint Genome Institute"/>
            <person name="Copeland A."/>
            <person name="Lucas S."/>
            <person name="Lapidus A."/>
            <person name="Barry K."/>
            <person name="Glavina del Rio T."/>
            <person name="Dalin E."/>
            <person name="Tice H."/>
            <person name="Pitluck S."/>
            <person name="Saunders E."/>
            <person name="Brettin T."/>
            <person name="Bruce D."/>
            <person name="Detter J.C."/>
            <person name="Han C."/>
            <person name="Schmutz J."/>
            <person name="Larimer F."/>
            <person name="Land M."/>
            <person name="Hauser L."/>
            <person name="Kyrpides N."/>
            <person name="Kim E."/>
            <person name="Marx C."/>
            <person name="Richardson P."/>
        </authorList>
    </citation>
    <scope>NUCLEOTIDE SEQUENCE [LARGE SCALE GENOMIC DNA]</scope>
    <source>
        <strain>PA1</strain>
    </source>
</reference>
<dbReference type="EC" id="4.1.1.49" evidence="1"/>
<dbReference type="EMBL" id="CP000908">
    <property type="protein sequence ID" value="ABY30038.1"/>
    <property type="molecule type" value="Genomic_DNA"/>
</dbReference>
<dbReference type="RefSeq" id="WP_003599882.1">
    <property type="nucleotide sequence ID" value="NC_010172.1"/>
</dbReference>
<dbReference type="SMR" id="A9W382"/>
<dbReference type="KEGG" id="mex:Mext_1639"/>
<dbReference type="eggNOG" id="COG1866">
    <property type="taxonomic scope" value="Bacteria"/>
</dbReference>
<dbReference type="HOGENOM" id="CLU_018247_0_1_5"/>
<dbReference type="BioCyc" id="MEXT419610:MEXT_RS08320-MONOMER"/>
<dbReference type="UniPathway" id="UPA00138"/>
<dbReference type="GO" id="GO:0005829">
    <property type="term" value="C:cytosol"/>
    <property type="evidence" value="ECO:0007669"/>
    <property type="project" value="TreeGrafter"/>
</dbReference>
<dbReference type="GO" id="GO:0005524">
    <property type="term" value="F:ATP binding"/>
    <property type="evidence" value="ECO:0007669"/>
    <property type="project" value="UniProtKB-UniRule"/>
</dbReference>
<dbReference type="GO" id="GO:0046872">
    <property type="term" value="F:metal ion binding"/>
    <property type="evidence" value="ECO:0007669"/>
    <property type="project" value="UniProtKB-KW"/>
</dbReference>
<dbReference type="GO" id="GO:0004612">
    <property type="term" value="F:phosphoenolpyruvate carboxykinase (ATP) activity"/>
    <property type="evidence" value="ECO:0007669"/>
    <property type="project" value="UniProtKB-UniRule"/>
</dbReference>
<dbReference type="GO" id="GO:0006094">
    <property type="term" value="P:gluconeogenesis"/>
    <property type="evidence" value="ECO:0007669"/>
    <property type="project" value="UniProtKB-UniRule"/>
</dbReference>
<dbReference type="Gene3D" id="3.90.228.20">
    <property type="match status" value="1"/>
</dbReference>
<dbReference type="Gene3D" id="3.40.449.10">
    <property type="entry name" value="Phosphoenolpyruvate Carboxykinase, domain 1"/>
    <property type="match status" value="1"/>
</dbReference>
<dbReference type="Gene3D" id="2.170.8.10">
    <property type="entry name" value="Phosphoenolpyruvate Carboxykinase, domain 2"/>
    <property type="match status" value="1"/>
</dbReference>
<dbReference type="HAMAP" id="MF_00453">
    <property type="entry name" value="PEPCK_ATP"/>
    <property type="match status" value="1"/>
</dbReference>
<dbReference type="InterPro" id="IPR001272">
    <property type="entry name" value="PEP_carboxykinase_ATP"/>
</dbReference>
<dbReference type="InterPro" id="IPR013035">
    <property type="entry name" value="PEP_carboxykinase_C"/>
</dbReference>
<dbReference type="InterPro" id="IPR008210">
    <property type="entry name" value="PEP_carboxykinase_N"/>
</dbReference>
<dbReference type="NCBIfam" id="TIGR00224">
    <property type="entry name" value="pckA"/>
    <property type="match status" value="1"/>
</dbReference>
<dbReference type="NCBIfam" id="NF006820">
    <property type="entry name" value="PRK09344.1-2"/>
    <property type="match status" value="1"/>
</dbReference>
<dbReference type="NCBIfam" id="NF006821">
    <property type="entry name" value="PRK09344.1-3"/>
    <property type="match status" value="1"/>
</dbReference>
<dbReference type="NCBIfam" id="NF006822">
    <property type="entry name" value="PRK09344.1-4"/>
    <property type="match status" value="1"/>
</dbReference>
<dbReference type="PANTHER" id="PTHR30031:SF0">
    <property type="entry name" value="PHOSPHOENOLPYRUVATE CARBOXYKINASE (ATP)"/>
    <property type="match status" value="1"/>
</dbReference>
<dbReference type="PANTHER" id="PTHR30031">
    <property type="entry name" value="PHOSPHOENOLPYRUVATE CARBOXYKINASE ATP"/>
    <property type="match status" value="1"/>
</dbReference>
<dbReference type="Pfam" id="PF01293">
    <property type="entry name" value="PEPCK_ATP"/>
    <property type="match status" value="1"/>
</dbReference>
<dbReference type="PIRSF" id="PIRSF006294">
    <property type="entry name" value="PEP_crbxkin"/>
    <property type="match status" value="1"/>
</dbReference>
<dbReference type="SUPFAM" id="SSF68923">
    <property type="entry name" value="PEP carboxykinase N-terminal domain"/>
    <property type="match status" value="1"/>
</dbReference>
<dbReference type="SUPFAM" id="SSF53795">
    <property type="entry name" value="PEP carboxykinase-like"/>
    <property type="match status" value="1"/>
</dbReference>
<evidence type="ECO:0000255" key="1">
    <source>
        <dbReference type="HAMAP-Rule" id="MF_00453"/>
    </source>
</evidence>
<name>PCKA_METEP</name>
<protein>
    <recommendedName>
        <fullName evidence="1">Phosphoenolpyruvate carboxykinase (ATP)</fullName>
        <shortName evidence="1">PCK</shortName>
        <shortName evidence="1">PEP carboxykinase</shortName>
        <shortName evidence="1">PEPCK</shortName>
        <ecNumber evidence="1">4.1.1.49</ecNumber>
    </recommendedName>
</protein>
<accession>A9W382</accession>